<comment type="function">
    <text evidence="1">Anchors the catalytic components of the fumarate reductase complex to the cell membrane, binds quinones.</text>
</comment>
<comment type="subunit">
    <text evidence="1">Part of an enzyme complex containing four subunits: a flavoprotein (FrdA), an iron-sulfur protein (FrdB), and two hydrophobic anchor proteins (FrdC and FrdD).</text>
</comment>
<comment type="subcellular location">
    <subcellularLocation>
        <location evidence="1">Cell inner membrane</location>
        <topology evidence="1">Multi-pass membrane protein</topology>
    </subcellularLocation>
</comment>
<comment type="similarity">
    <text evidence="1">Belongs to the FrdC family.</text>
</comment>
<accession>Q5E2B5</accession>
<organism>
    <name type="scientific">Aliivibrio fischeri (strain ATCC 700601 / ES114)</name>
    <name type="common">Vibrio fischeri</name>
    <dbReference type="NCBI Taxonomy" id="312309"/>
    <lineage>
        <taxon>Bacteria</taxon>
        <taxon>Pseudomonadati</taxon>
        <taxon>Pseudomonadota</taxon>
        <taxon>Gammaproteobacteria</taxon>
        <taxon>Vibrionales</taxon>
        <taxon>Vibrionaceae</taxon>
        <taxon>Aliivibrio</taxon>
    </lineage>
</organism>
<gene>
    <name evidence="1" type="primary">frdC</name>
    <name type="ordered locus">VF_2336</name>
</gene>
<reference key="1">
    <citation type="journal article" date="2005" name="Proc. Natl. Acad. Sci. U.S.A.">
        <title>Complete genome sequence of Vibrio fischeri: a symbiotic bacterium with pathogenic congeners.</title>
        <authorList>
            <person name="Ruby E.G."/>
            <person name="Urbanowski M."/>
            <person name="Campbell J."/>
            <person name="Dunn A."/>
            <person name="Faini M."/>
            <person name="Gunsalus R."/>
            <person name="Lostroh P."/>
            <person name="Lupp C."/>
            <person name="McCann J."/>
            <person name="Millikan D."/>
            <person name="Schaefer A."/>
            <person name="Stabb E."/>
            <person name="Stevens A."/>
            <person name="Visick K."/>
            <person name="Whistler C."/>
            <person name="Greenberg E.P."/>
        </authorList>
    </citation>
    <scope>NUCLEOTIDE SEQUENCE [LARGE SCALE GENOMIC DNA]</scope>
    <source>
        <strain>ATCC 700601 / ES114</strain>
    </source>
</reference>
<keyword id="KW-0997">Cell inner membrane</keyword>
<keyword id="KW-1003">Cell membrane</keyword>
<keyword id="KW-0472">Membrane</keyword>
<keyword id="KW-1185">Reference proteome</keyword>
<keyword id="KW-0812">Transmembrane</keyword>
<keyword id="KW-1133">Transmembrane helix</keyword>
<dbReference type="EMBL" id="CP000020">
    <property type="protein sequence ID" value="AAW86831.1"/>
    <property type="molecule type" value="Genomic_DNA"/>
</dbReference>
<dbReference type="RefSeq" id="WP_005421183.1">
    <property type="nucleotide sequence ID" value="NZ_CAWLES010000001.1"/>
</dbReference>
<dbReference type="RefSeq" id="YP_205719.1">
    <property type="nucleotide sequence ID" value="NC_006840.2"/>
</dbReference>
<dbReference type="SMR" id="Q5E2B5"/>
<dbReference type="STRING" id="312309.VF_2336"/>
<dbReference type="EnsemblBacteria" id="AAW86831">
    <property type="protein sequence ID" value="AAW86831"/>
    <property type="gene ID" value="VF_2336"/>
</dbReference>
<dbReference type="GeneID" id="54165059"/>
<dbReference type="KEGG" id="vfi:VF_2336"/>
<dbReference type="PATRIC" id="fig|312309.11.peg.2375"/>
<dbReference type="eggNOG" id="COG3029">
    <property type="taxonomic scope" value="Bacteria"/>
</dbReference>
<dbReference type="HOGENOM" id="CLU_156492_0_0_6"/>
<dbReference type="OrthoDB" id="8909678at2"/>
<dbReference type="Proteomes" id="UP000000537">
    <property type="component" value="Chromosome I"/>
</dbReference>
<dbReference type="GO" id="GO:0045283">
    <property type="term" value="C:fumarate reductase complex"/>
    <property type="evidence" value="ECO:0007669"/>
    <property type="project" value="UniProtKB-UniRule"/>
</dbReference>
<dbReference type="GO" id="GO:0005886">
    <property type="term" value="C:plasma membrane"/>
    <property type="evidence" value="ECO:0007669"/>
    <property type="project" value="UniProtKB-SubCell"/>
</dbReference>
<dbReference type="GO" id="GO:0000104">
    <property type="term" value="F:succinate dehydrogenase activity"/>
    <property type="evidence" value="ECO:0007669"/>
    <property type="project" value="UniProtKB-UniRule"/>
</dbReference>
<dbReference type="CDD" id="cd00546">
    <property type="entry name" value="QFR_TypeD_subunitC"/>
    <property type="match status" value="1"/>
</dbReference>
<dbReference type="Gene3D" id="1.20.1300.10">
    <property type="entry name" value="Fumarate reductase/succinate dehydrogenase, transmembrane subunit"/>
    <property type="match status" value="1"/>
</dbReference>
<dbReference type="HAMAP" id="MF_00708">
    <property type="entry name" value="Fumarate_red_C"/>
    <property type="match status" value="1"/>
</dbReference>
<dbReference type="InterPro" id="IPR003510">
    <property type="entry name" value="Fumarate_red_C"/>
</dbReference>
<dbReference type="InterPro" id="IPR034804">
    <property type="entry name" value="SQR/QFR_C/D"/>
</dbReference>
<dbReference type="NCBIfam" id="NF003445">
    <property type="entry name" value="PRK04987.1"/>
    <property type="match status" value="1"/>
</dbReference>
<dbReference type="Pfam" id="PF02300">
    <property type="entry name" value="Fumarate_red_C"/>
    <property type="match status" value="1"/>
</dbReference>
<dbReference type="PIRSF" id="PIRSF000180">
    <property type="entry name" value="FrdC"/>
    <property type="match status" value="1"/>
</dbReference>
<dbReference type="SUPFAM" id="SSF81343">
    <property type="entry name" value="Fumarate reductase respiratory complex transmembrane subunits"/>
    <property type="match status" value="1"/>
</dbReference>
<sequence length="127" mass="14339">MSNRKPYVREMTRTWWKDHPFYRFYMVREATVLPLIFFTICLLVGLGSLVKGPLAWASWLDFMANPIVVALNIVALAGSLFHAQTFFSMMPQVMPIRLGGKTLDKKVVVLAQWAAVAAITLLVLVIV</sequence>
<protein>
    <recommendedName>
        <fullName evidence="1">Fumarate reductase subunit C</fullName>
    </recommendedName>
    <alternativeName>
        <fullName evidence="1">Quinol-fumarate reductase subunit C</fullName>
        <shortName evidence="1">QFR subunit C</shortName>
    </alternativeName>
</protein>
<feature type="chain" id="PRO_1000045536" description="Fumarate reductase subunit C">
    <location>
        <begin position="1"/>
        <end position="127"/>
    </location>
</feature>
<feature type="transmembrane region" description="Helical" evidence="1">
    <location>
        <begin position="30"/>
        <end position="50"/>
    </location>
</feature>
<feature type="transmembrane region" description="Helical" evidence="1">
    <location>
        <begin position="67"/>
        <end position="87"/>
    </location>
</feature>
<feature type="transmembrane region" description="Helical" evidence="1">
    <location>
        <begin position="107"/>
        <end position="127"/>
    </location>
</feature>
<name>FRDC_ALIF1</name>
<evidence type="ECO:0000255" key="1">
    <source>
        <dbReference type="HAMAP-Rule" id="MF_00708"/>
    </source>
</evidence>
<proteinExistence type="inferred from homology"/>